<evidence type="ECO:0000255" key="1">
    <source>
        <dbReference type="HAMAP-Rule" id="MF_00021"/>
    </source>
</evidence>
<reference key="1">
    <citation type="journal article" date="2005" name="Proc. Natl. Acad. Sci. U.S.A.">
        <title>Complete genome sequence of the probiotic lactic acid bacterium Lactobacillus acidophilus NCFM.</title>
        <authorList>
            <person name="Altermann E."/>
            <person name="Russell W.M."/>
            <person name="Azcarate-Peril M.A."/>
            <person name="Barrangou R."/>
            <person name="Buck B.L."/>
            <person name="McAuliffe O."/>
            <person name="Souther N."/>
            <person name="Dobson A."/>
            <person name="Duong T."/>
            <person name="Callanan M."/>
            <person name="Lick S."/>
            <person name="Hamrick A."/>
            <person name="Cano R."/>
            <person name="Klaenhammer T.R."/>
        </authorList>
    </citation>
    <scope>NUCLEOTIDE SEQUENCE [LARGE SCALE GENOMIC DNA]</scope>
    <source>
        <strain>ATCC 700396 / NCK56 / N2 / NCFM</strain>
    </source>
</reference>
<accession>Q5FKW9</accession>
<proteinExistence type="inferred from homology"/>
<gene>
    <name evidence="1" type="primary">thiI</name>
    <name type="ordered locus">LBA0790</name>
</gene>
<organism>
    <name type="scientific">Lactobacillus acidophilus (strain ATCC 700396 / NCK56 / N2 / NCFM)</name>
    <dbReference type="NCBI Taxonomy" id="272621"/>
    <lineage>
        <taxon>Bacteria</taxon>
        <taxon>Bacillati</taxon>
        <taxon>Bacillota</taxon>
        <taxon>Bacilli</taxon>
        <taxon>Lactobacillales</taxon>
        <taxon>Lactobacillaceae</taxon>
        <taxon>Lactobacillus</taxon>
    </lineage>
</organism>
<dbReference type="EC" id="2.8.1.4" evidence="1"/>
<dbReference type="EMBL" id="CP000033">
    <property type="protein sequence ID" value="AAV42655.1"/>
    <property type="molecule type" value="Genomic_DNA"/>
</dbReference>
<dbReference type="RefSeq" id="WP_003546762.1">
    <property type="nucleotide sequence ID" value="NC_006814.3"/>
</dbReference>
<dbReference type="RefSeq" id="YP_193686.1">
    <property type="nucleotide sequence ID" value="NC_006814.3"/>
</dbReference>
<dbReference type="SMR" id="Q5FKW9"/>
<dbReference type="STRING" id="272621.LBA0790"/>
<dbReference type="GeneID" id="93290086"/>
<dbReference type="KEGG" id="lac:LBA0790"/>
<dbReference type="PATRIC" id="fig|272621.13.peg.753"/>
<dbReference type="eggNOG" id="COG0301">
    <property type="taxonomic scope" value="Bacteria"/>
</dbReference>
<dbReference type="HOGENOM" id="CLU_037952_4_0_9"/>
<dbReference type="OrthoDB" id="9773948at2"/>
<dbReference type="BioCyc" id="LACI272621:G1G49-805-MONOMER"/>
<dbReference type="UniPathway" id="UPA00060"/>
<dbReference type="Proteomes" id="UP000006381">
    <property type="component" value="Chromosome"/>
</dbReference>
<dbReference type="GO" id="GO:0005829">
    <property type="term" value="C:cytosol"/>
    <property type="evidence" value="ECO:0007669"/>
    <property type="project" value="TreeGrafter"/>
</dbReference>
<dbReference type="GO" id="GO:0005524">
    <property type="term" value="F:ATP binding"/>
    <property type="evidence" value="ECO:0007669"/>
    <property type="project" value="UniProtKB-UniRule"/>
</dbReference>
<dbReference type="GO" id="GO:0004810">
    <property type="term" value="F:CCA tRNA nucleotidyltransferase activity"/>
    <property type="evidence" value="ECO:0007669"/>
    <property type="project" value="InterPro"/>
</dbReference>
<dbReference type="GO" id="GO:0000049">
    <property type="term" value="F:tRNA binding"/>
    <property type="evidence" value="ECO:0007669"/>
    <property type="project" value="UniProtKB-UniRule"/>
</dbReference>
<dbReference type="GO" id="GO:0140741">
    <property type="term" value="F:tRNA-uracil-4 sulfurtransferase activity"/>
    <property type="evidence" value="ECO:0007669"/>
    <property type="project" value="UniProtKB-EC"/>
</dbReference>
<dbReference type="GO" id="GO:0009228">
    <property type="term" value="P:thiamine biosynthetic process"/>
    <property type="evidence" value="ECO:0007669"/>
    <property type="project" value="UniProtKB-KW"/>
</dbReference>
<dbReference type="GO" id="GO:0009229">
    <property type="term" value="P:thiamine diphosphate biosynthetic process"/>
    <property type="evidence" value="ECO:0007669"/>
    <property type="project" value="UniProtKB-UniRule"/>
</dbReference>
<dbReference type="GO" id="GO:0052837">
    <property type="term" value="P:thiazole biosynthetic process"/>
    <property type="evidence" value="ECO:0007669"/>
    <property type="project" value="TreeGrafter"/>
</dbReference>
<dbReference type="GO" id="GO:0002937">
    <property type="term" value="P:tRNA 4-thiouridine biosynthesis"/>
    <property type="evidence" value="ECO:0007669"/>
    <property type="project" value="TreeGrafter"/>
</dbReference>
<dbReference type="CDD" id="cd01712">
    <property type="entry name" value="PPase_ThiI"/>
    <property type="match status" value="1"/>
</dbReference>
<dbReference type="CDD" id="cd11716">
    <property type="entry name" value="THUMP_ThiI"/>
    <property type="match status" value="1"/>
</dbReference>
<dbReference type="FunFam" id="3.40.50.620:FF:000053">
    <property type="entry name" value="Probable tRNA sulfurtransferase"/>
    <property type="match status" value="1"/>
</dbReference>
<dbReference type="Gene3D" id="3.30.2130.30">
    <property type="match status" value="1"/>
</dbReference>
<dbReference type="Gene3D" id="3.40.50.620">
    <property type="entry name" value="HUPs"/>
    <property type="match status" value="1"/>
</dbReference>
<dbReference type="HAMAP" id="MF_00021">
    <property type="entry name" value="ThiI"/>
    <property type="match status" value="1"/>
</dbReference>
<dbReference type="InterPro" id="IPR014729">
    <property type="entry name" value="Rossmann-like_a/b/a_fold"/>
</dbReference>
<dbReference type="InterPro" id="IPR020536">
    <property type="entry name" value="ThiI_AANH"/>
</dbReference>
<dbReference type="InterPro" id="IPR054173">
    <property type="entry name" value="ThiI_fer"/>
</dbReference>
<dbReference type="InterPro" id="IPR049961">
    <property type="entry name" value="ThiI_N"/>
</dbReference>
<dbReference type="InterPro" id="IPR004114">
    <property type="entry name" value="THUMP_dom"/>
</dbReference>
<dbReference type="InterPro" id="IPR049962">
    <property type="entry name" value="THUMP_ThiI"/>
</dbReference>
<dbReference type="InterPro" id="IPR003720">
    <property type="entry name" value="tRNA_STrfase"/>
</dbReference>
<dbReference type="InterPro" id="IPR050102">
    <property type="entry name" value="tRNA_sulfurtransferase_ThiI"/>
</dbReference>
<dbReference type="NCBIfam" id="TIGR00342">
    <property type="entry name" value="tRNA uracil 4-sulfurtransferase ThiI"/>
    <property type="match status" value="1"/>
</dbReference>
<dbReference type="PANTHER" id="PTHR43209">
    <property type="entry name" value="TRNA SULFURTRANSFERASE"/>
    <property type="match status" value="1"/>
</dbReference>
<dbReference type="PANTHER" id="PTHR43209:SF1">
    <property type="entry name" value="TRNA SULFURTRANSFERASE"/>
    <property type="match status" value="1"/>
</dbReference>
<dbReference type="Pfam" id="PF02568">
    <property type="entry name" value="ThiI"/>
    <property type="match status" value="1"/>
</dbReference>
<dbReference type="Pfam" id="PF22025">
    <property type="entry name" value="ThiI_fer"/>
    <property type="match status" value="1"/>
</dbReference>
<dbReference type="Pfam" id="PF02926">
    <property type="entry name" value="THUMP"/>
    <property type="match status" value="1"/>
</dbReference>
<dbReference type="SMART" id="SM00981">
    <property type="entry name" value="THUMP"/>
    <property type="match status" value="1"/>
</dbReference>
<dbReference type="SUPFAM" id="SSF52402">
    <property type="entry name" value="Adenine nucleotide alpha hydrolases-like"/>
    <property type="match status" value="1"/>
</dbReference>
<dbReference type="SUPFAM" id="SSF143437">
    <property type="entry name" value="THUMP domain-like"/>
    <property type="match status" value="1"/>
</dbReference>
<dbReference type="PROSITE" id="PS51165">
    <property type="entry name" value="THUMP"/>
    <property type="match status" value="1"/>
</dbReference>
<feature type="chain" id="PRO_1000074232" description="Probable tRNA sulfurtransferase">
    <location>
        <begin position="1"/>
        <end position="405"/>
    </location>
</feature>
<feature type="domain" description="THUMP" evidence="1">
    <location>
        <begin position="60"/>
        <end position="165"/>
    </location>
</feature>
<feature type="binding site" evidence="1">
    <location>
        <begin position="183"/>
        <end position="184"/>
    </location>
    <ligand>
        <name>ATP</name>
        <dbReference type="ChEBI" id="CHEBI:30616"/>
    </ligand>
</feature>
<feature type="binding site" evidence="1">
    <location>
        <begin position="208"/>
        <end position="209"/>
    </location>
    <ligand>
        <name>ATP</name>
        <dbReference type="ChEBI" id="CHEBI:30616"/>
    </ligand>
</feature>
<feature type="binding site" evidence="1">
    <location>
        <position position="265"/>
    </location>
    <ligand>
        <name>ATP</name>
        <dbReference type="ChEBI" id="CHEBI:30616"/>
    </ligand>
</feature>
<feature type="binding site" evidence="1">
    <location>
        <position position="287"/>
    </location>
    <ligand>
        <name>ATP</name>
        <dbReference type="ChEBI" id="CHEBI:30616"/>
    </ligand>
</feature>
<feature type="binding site" evidence="1">
    <location>
        <position position="296"/>
    </location>
    <ligand>
        <name>ATP</name>
        <dbReference type="ChEBI" id="CHEBI:30616"/>
    </ligand>
</feature>
<comment type="function">
    <text evidence="1">Catalyzes the ATP-dependent transfer of a sulfur to tRNA to produce 4-thiouridine in position 8 of tRNAs, which functions as a near-UV photosensor. Also catalyzes the transfer of sulfur to the sulfur carrier protein ThiS, forming ThiS-thiocarboxylate. This is a step in the synthesis of thiazole, in the thiamine biosynthesis pathway. The sulfur is donated as persulfide by IscS.</text>
</comment>
<comment type="catalytic activity">
    <reaction evidence="1">
        <text>[ThiI sulfur-carrier protein]-S-sulfanyl-L-cysteine + a uridine in tRNA + 2 reduced [2Fe-2S]-[ferredoxin] + ATP + H(+) = [ThiI sulfur-carrier protein]-L-cysteine + a 4-thiouridine in tRNA + 2 oxidized [2Fe-2S]-[ferredoxin] + AMP + diphosphate</text>
        <dbReference type="Rhea" id="RHEA:24176"/>
        <dbReference type="Rhea" id="RHEA-COMP:10000"/>
        <dbReference type="Rhea" id="RHEA-COMP:10001"/>
        <dbReference type="Rhea" id="RHEA-COMP:13337"/>
        <dbReference type="Rhea" id="RHEA-COMP:13338"/>
        <dbReference type="Rhea" id="RHEA-COMP:13339"/>
        <dbReference type="Rhea" id="RHEA-COMP:13340"/>
        <dbReference type="ChEBI" id="CHEBI:15378"/>
        <dbReference type="ChEBI" id="CHEBI:29950"/>
        <dbReference type="ChEBI" id="CHEBI:30616"/>
        <dbReference type="ChEBI" id="CHEBI:33019"/>
        <dbReference type="ChEBI" id="CHEBI:33737"/>
        <dbReference type="ChEBI" id="CHEBI:33738"/>
        <dbReference type="ChEBI" id="CHEBI:61963"/>
        <dbReference type="ChEBI" id="CHEBI:65315"/>
        <dbReference type="ChEBI" id="CHEBI:136798"/>
        <dbReference type="ChEBI" id="CHEBI:456215"/>
        <dbReference type="EC" id="2.8.1.4"/>
    </reaction>
</comment>
<comment type="catalytic activity">
    <reaction evidence="1">
        <text>[ThiS sulfur-carrier protein]-C-terminal Gly-Gly-AMP + S-sulfanyl-L-cysteinyl-[cysteine desulfurase] + AH2 = [ThiS sulfur-carrier protein]-C-terminal-Gly-aminoethanethioate + L-cysteinyl-[cysteine desulfurase] + A + AMP + 2 H(+)</text>
        <dbReference type="Rhea" id="RHEA:43340"/>
        <dbReference type="Rhea" id="RHEA-COMP:12157"/>
        <dbReference type="Rhea" id="RHEA-COMP:12158"/>
        <dbReference type="Rhea" id="RHEA-COMP:12910"/>
        <dbReference type="Rhea" id="RHEA-COMP:19908"/>
        <dbReference type="ChEBI" id="CHEBI:13193"/>
        <dbReference type="ChEBI" id="CHEBI:15378"/>
        <dbReference type="ChEBI" id="CHEBI:17499"/>
        <dbReference type="ChEBI" id="CHEBI:29950"/>
        <dbReference type="ChEBI" id="CHEBI:61963"/>
        <dbReference type="ChEBI" id="CHEBI:90618"/>
        <dbReference type="ChEBI" id="CHEBI:232372"/>
        <dbReference type="ChEBI" id="CHEBI:456215"/>
    </reaction>
</comment>
<comment type="pathway">
    <text evidence="1">Cofactor biosynthesis; thiamine diphosphate biosynthesis.</text>
</comment>
<comment type="subcellular location">
    <subcellularLocation>
        <location evidence="1">Cytoplasm</location>
    </subcellularLocation>
</comment>
<comment type="similarity">
    <text evidence="1">Belongs to the ThiI family.</text>
</comment>
<name>THII_LACAC</name>
<keyword id="KW-0067">ATP-binding</keyword>
<keyword id="KW-0963">Cytoplasm</keyword>
<keyword id="KW-0547">Nucleotide-binding</keyword>
<keyword id="KW-1185">Reference proteome</keyword>
<keyword id="KW-0694">RNA-binding</keyword>
<keyword id="KW-0784">Thiamine biosynthesis</keyword>
<keyword id="KW-0808">Transferase</keyword>
<keyword id="KW-0820">tRNA-binding</keyword>
<sequence>MEYTEVMVRYGELSTKGKNRKDFINRLATNVERVLKDFPQIEFHPRHDRMHIILNGAPFTEVDKRLKKVFGIQTYSPAIKIPKTLEDIEKTSLELMKETFKPGMTFKINTKRSDHKFEYDTNQLNNLVGDFLFDNIDNLKAEMKHPDLVLRIEVRQDAVYISNQLLHGVGGMPVGTAGKAVMMLSGGIDSPVASWLALKRGVDIEMVHFFSPPYTTEKALAKAKELTGILANYAGKINFIAVPFAEIQETIKEKLPEGYLMTVQRRFMLQLADRIRAMRGGLAIFNGESVGQVASQTLESMVAINDVTTTPVIRPVATMDKTEIIAKAEEIGTFDLSIQPFEDCCTIFAPPRPKTKPKLDKAREYEARLDVEGLIQRALDGIEVMPIYPNQKFLDDKAQEDADLL</sequence>
<protein>
    <recommendedName>
        <fullName evidence="1">Probable tRNA sulfurtransferase</fullName>
        <ecNumber evidence="1">2.8.1.4</ecNumber>
    </recommendedName>
    <alternativeName>
        <fullName evidence="1">Sulfur carrier protein ThiS sulfurtransferase</fullName>
    </alternativeName>
    <alternativeName>
        <fullName evidence="1">Thiamine biosynthesis protein ThiI</fullName>
    </alternativeName>
    <alternativeName>
        <fullName evidence="1">tRNA 4-thiouridine synthase</fullName>
    </alternativeName>
</protein>